<proteinExistence type="evidence at transcript level"/>
<sequence>MQANGAAAAAAGEEPAGSGCLSAHNGESSEPAHSNGVLSSNNGLSGTGSTGPTEQPGGRKKKRLSQADEDVIRLIGQHLHGLGLNQTVDLLMQESGCRLEHPSATKFRNHVMEGEWDKAENDLNELKSLVHSPHAVAACRPSSGGSGSEHSPTSCPTADVIRRMKFLLLQQKYLEYLEDGKVLEALQVLRCELTPLKYNTERIHVLSGYLMCSHADDLRAKAEWEGKGTASRSKLLDKLQTYLPPSVMLPPRRLQTLLRQAVELQRDRCLYHNTKLDNNLDSVSLLIDHVCSRKQFPCFTQQVLTEHCNEVWFCKFSNDGTKLATGSKDTTVIIWQVDPDTHQLKLLKTLEGHAYGVSYLAWSPDDNYLIACGPDDCSELWLWNVQTGELRTKMSQSHEDSLTSVAWNPDGKRFVTGGQRGQFYQCDLDGNLLDSWEGVRVQCLWCLSDGKTVLASDTHQRIRGYNFEDLTDRNIVQEDHPIMSFTISRNGRLALLNVATQGVHLWDLQDRVLVRKYQGVTQGFYTIHSCFGGHNEDFIASGSEDHKVYVWHKRSELPIAELTGHTRTVNCVSWNPQIPSLMASASDDGTVRIWGPAPYVDNQEFEEECSSMNS</sequence>
<name>WDR26_XENTR</name>
<dbReference type="EMBL" id="CR855782">
    <property type="protein sequence ID" value="CAJ81593.1"/>
    <property type="status" value="ALT_INIT"/>
    <property type="molecule type" value="mRNA"/>
</dbReference>
<dbReference type="RefSeq" id="NP_001039080.1">
    <property type="nucleotide sequence ID" value="NM_001045615.1"/>
</dbReference>
<dbReference type="SMR" id="Q28D01"/>
<dbReference type="FunCoup" id="Q28D01">
    <property type="interactions" value="2703"/>
</dbReference>
<dbReference type="STRING" id="8364.ENSXETP00000017750"/>
<dbReference type="PaxDb" id="8364-ENSXETP00000058540"/>
<dbReference type="DNASU" id="733878"/>
<dbReference type="GeneID" id="733878"/>
<dbReference type="KEGG" id="xtr:733878"/>
<dbReference type="CTD" id="80232"/>
<dbReference type="eggNOG" id="KOG0293">
    <property type="taxonomic scope" value="Eukaryota"/>
</dbReference>
<dbReference type="InParanoid" id="Q28D01"/>
<dbReference type="OrthoDB" id="972532at2759"/>
<dbReference type="Reactome" id="R-XTR-9861718">
    <property type="pathway name" value="Regulation of pyruvate metabolism"/>
</dbReference>
<dbReference type="Proteomes" id="UP000008143">
    <property type="component" value="Chromosome 5"/>
</dbReference>
<dbReference type="GO" id="GO:0005739">
    <property type="term" value="C:mitochondrion"/>
    <property type="evidence" value="ECO:0007669"/>
    <property type="project" value="UniProtKB-SubCell"/>
</dbReference>
<dbReference type="GO" id="GO:0005634">
    <property type="term" value="C:nucleus"/>
    <property type="evidence" value="ECO:0007669"/>
    <property type="project" value="UniProtKB-SubCell"/>
</dbReference>
<dbReference type="CDD" id="cd00200">
    <property type="entry name" value="WD40"/>
    <property type="match status" value="1"/>
</dbReference>
<dbReference type="FunFam" id="2.130.10.10:FF:000087">
    <property type="entry name" value="WD repeat-containing protein 26 homolog"/>
    <property type="match status" value="1"/>
</dbReference>
<dbReference type="Gene3D" id="2.130.10.10">
    <property type="entry name" value="YVTN repeat-like/Quinoprotein amine dehydrogenase"/>
    <property type="match status" value="1"/>
</dbReference>
<dbReference type="InterPro" id="IPR006595">
    <property type="entry name" value="CTLH_C"/>
</dbReference>
<dbReference type="InterPro" id="IPR006594">
    <property type="entry name" value="LisH"/>
</dbReference>
<dbReference type="InterPro" id="IPR054532">
    <property type="entry name" value="TPL_SMU1_LisH-like"/>
</dbReference>
<dbReference type="InterPro" id="IPR015943">
    <property type="entry name" value="WD40/YVTN_repeat-like_dom_sf"/>
</dbReference>
<dbReference type="InterPro" id="IPR036322">
    <property type="entry name" value="WD40_repeat_dom_sf"/>
</dbReference>
<dbReference type="InterPro" id="IPR001680">
    <property type="entry name" value="WD40_rpt"/>
</dbReference>
<dbReference type="InterPro" id="IPR051350">
    <property type="entry name" value="WD_repeat-ST_regulator"/>
</dbReference>
<dbReference type="PANTHER" id="PTHR22838">
    <property type="entry name" value="WD REPEAT PROTEIN 26-RELATED"/>
    <property type="match status" value="1"/>
</dbReference>
<dbReference type="PANTHER" id="PTHR22838:SF0">
    <property type="entry name" value="WD REPEAT-CONTAINING PROTEIN 26"/>
    <property type="match status" value="1"/>
</dbReference>
<dbReference type="Pfam" id="PF17814">
    <property type="entry name" value="LisH_TPL"/>
    <property type="match status" value="1"/>
</dbReference>
<dbReference type="Pfam" id="PF00400">
    <property type="entry name" value="WD40"/>
    <property type="match status" value="5"/>
</dbReference>
<dbReference type="SMART" id="SM00668">
    <property type="entry name" value="CTLH"/>
    <property type="match status" value="1"/>
</dbReference>
<dbReference type="SMART" id="SM00320">
    <property type="entry name" value="WD40"/>
    <property type="match status" value="5"/>
</dbReference>
<dbReference type="SUPFAM" id="SSF50978">
    <property type="entry name" value="WD40 repeat-like"/>
    <property type="match status" value="1"/>
</dbReference>
<dbReference type="PROSITE" id="PS50897">
    <property type="entry name" value="CTLH"/>
    <property type="match status" value="1"/>
</dbReference>
<dbReference type="PROSITE" id="PS50896">
    <property type="entry name" value="LISH"/>
    <property type="match status" value="1"/>
</dbReference>
<dbReference type="PROSITE" id="PS50082">
    <property type="entry name" value="WD_REPEATS_2"/>
    <property type="match status" value="3"/>
</dbReference>
<dbReference type="PROSITE" id="PS50294">
    <property type="entry name" value="WD_REPEATS_REGION"/>
    <property type="match status" value="1"/>
</dbReference>
<gene>
    <name type="primary">wdr26</name>
    <name type="ORF">TGas059a07.1</name>
</gene>
<evidence type="ECO:0000250" key="1">
    <source>
        <dbReference type="UniProtKB" id="F1LTR1"/>
    </source>
</evidence>
<evidence type="ECO:0000250" key="2">
    <source>
        <dbReference type="UniProtKB" id="Q9H7D7"/>
    </source>
</evidence>
<evidence type="ECO:0000255" key="3">
    <source>
        <dbReference type="PROSITE-ProRule" id="PRU00058"/>
    </source>
</evidence>
<evidence type="ECO:0000255" key="4">
    <source>
        <dbReference type="PROSITE-ProRule" id="PRU00126"/>
    </source>
</evidence>
<evidence type="ECO:0000256" key="5">
    <source>
        <dbReference type="SAM" id="MobiDB-lite"/>
    </source>
</evidence>
<evidence type="ECO:0000305" key="6"/>
<accession>Q28D01</accession>
<reference key="1">
    <citation type="submission" date="2006-10" db="EMBL/GenBank/DDBJ databases">
        <authorList>
            <consortium name="Sanger Xenopus tropicalis EST/cDNA project"/>
        </authorList>
    </citation>
    <scope>NUCLEOTIDE SEQUENCE [LARGE SCALE MRNA]</scope>
    <source>
        <tissue>Gastrula</tissue>
    </source>
</reference>
<protein>
    <recommendedName>
        <fullName>WD repeat-containing protein 26</fullName>
    </recommendedName>
</protein>
<keyword id="KW-0963">Cytoplasm</keyword>
<keyword id="KW-0496">Mitochondrion</keyword>
<keyword id="KW-0539">Nucleus</keyword>
<keyword id="KW-1185">Reference proteome</keyword>
<keyword id="KW-0677">Repeat</keyword>
<keyword id="KW-0853">WD repeat</keyword>
<feature type="chain" id="PRO_0000280738" description="WD repeat-containing protein 26">
    <location>
        <begin position="1"/>
        <end position="614"/>
    </location>
</feature>
<feature type="domain" description="LisH" evidence="4">
    <location>
        <begin position="67"/>
        <end position="99"/>
    </location>
</feature>
<feature type="domain" description="CTLH" evidence="3">
    <location>
        <begin position="100"/>
        <end position="184"/>
    </location>
</feature>
<feature type="repeat" description="WD 1">
    <location>
        <begin position="306"/>
        <end position="345"/>
    </location>
</feature>
<feature type="repeat" description="WD 2">
    <location>
        <begin position="352"/>
        <end position="391"/>
    </location>
</feature>
<feature type="repeat" description="WD 3">
    <location>
        <begin position="397"/>
        <end position="437"/>
    </location>
</feature>
<feature type="repeat" description="WD 4">
    <location>
        <begin position="477"/>
        <end position="516"/>
    </location>
</feature>
<feature type="repeat" description="WD 5">
    <location>
        <begin position="519"/>
        <end position="561"/>
    </location>
</feature>
<feature type="repeat" description="WD 6">
    <location>
        <begin position="564"/>
        <end position="604"/>
    </location>
</feature>
<feature type="region of interest" description="Disordered" evidence="5">
    <location>
        <begin position="1"/>
        <end position="65"/>
    </location>
</feature>
<feature type="compositionally biased region" description="Low complexity" evidence="5">
    <location>
        <begin position="1"/>
        <end position="19"/>
    </location>
</feature>
<feature type="compositionally biased region" description="Low complexity" evidence="5">
    <location>
        <begin position="34"/>
        <end position="44"/>
    </location>
</feature>
<comment type="function">
    <text evidence="1 2">G-beta-like protein involved in cell signal transduction. Acts as a negative regulator in MAPK signaling pathway. Functions as a scaffolding protein to promote G beta:gamma-mediated PLCB2 plasma membrane translocation and subsequent activation in leukocytes. Core component of the CTLH E3 ubiquitin-protein ligase complex that mediates ubiquitination and subsequent proteasomal degradation of target proteins (By similarity). Acts as a negative regulator of the canonical Wnt signaling pathway through preventing ubiquitination of beta-catenin CTNNB1 by the beta-catenin destruction complex, thus negatively regulating CTNNB1 degradation. Serves as a scaffold to coordinate PI3K/AKT pathway-driven cell growth and migration. Protects cells from oxidative stress-induced apoptosis via the down-regulation of AP-1 transcriptional activity as well as by inhibiting cytochrome c release from mitochondria (By similarity). Also protects cells by promoting hypoxia-mediated autophagy and mitophagy (By similarity).</text>
</comment>
<comment type="subunit">
    <text evidence="2">Forms homooligomers. Identified in the CTLH complex that contains at least MAEA, RMND5A (or alternatively its paralog RMND5B), GID8, WDR26, and RANBP9 and/or RANBP10. Interacts with DDB1-CUL4A/B E3 ligase complexes.</text>
</comment>
<comment type="subcellular location">
    <subcellularLocation>
        <location evidence="2">Cytoplasm</location>
    </subcellularLocation>
    <subcellularLocation>
        <location evidence="2">Nucleus</location>
    </subcellularLocation>
    <subcellularLocation>
        <location evidence="1">Mitochondrion</location>
    </subcellularLocation>
</comment>
<comment type="sequence caution" evidence="6">
    <conflict type="erroneous initiation">
        <sequence resource="EMBL-CDS" id="CAJ81593"/>
    </conflict>
</comment>
<organism>
    <name type="scientific">Xenopus tropicalis</name>
    <name type="common">Western clawed frog</name>
    <name type="synonym">Silurana tropicalis</name>
    <dbReference type="NCBI Taxonomy" id="8364"/>
    <lineage>
        <taxon>Eukaryota</taxon>
        <taxon>Metazoa</taxon>
        <taxon>Chordata</taxon>
        <taxon>Craniata</taxon>
        <taxon>Vertebrata</taxon>
        <taxon>Euteleostomi</taxon>
        <taxon>Amphibia</taxon>
        <taxon>Batrachia</taxon>
        <taxon>Anura</taxon>
        <taxon>Pipoidea</taxon>
        <taxon>Pipidae</taxon>
        <taxon>Xenopodinae</taxon>
        <taxon>Xenopus</taxon>
        <taxon>Silurana</taxon>
    </lineage>
</organism>